<keyword id="KW-0004">4Fe-4S</keyword>
<keyword id="KW-0408">Iron</keyword>
<keyword id="KW-0411">Iron-sulfur</keyword>
<keyword id="KW-0414">Isoprene biosynthesis</keyword>
<keyword id="KW-0479">Metal-binding</keyword>
<keyword id="KW-0560">Oxidoreductase</keyword>
<sequence length="334" mass="36218">MSADKQKLTIRLCGPRGFCAGVDRAIQIVVLALKKYGPPVYVRHEIVHNRYVVEGLQQRGAIFIEDLDEIPEEHRERPVVFSAHGVPKSVPADAQARNLFYLDATCPLVSKVHKQAMRHQRLGRHVLLIGHAGHPEVIGTMGQLPHGAVTLIETVEDALHFPPPAGVELGYVSQTTLSLEDTAEIISALERRFDNIHAPAAESICYATTNRQNAVKAAAPGSDLFLVVGAPNSSNSRRLVEVAERAGARRALLVQRASEIPWEEIADLSVLGLSAGASAPEIIVDEIIAAFADSYDVSVELAITAEEPENFPVMRALRDVELTKADMAFVNGVG</sequence>
<protein>
    <recommendedName>
        <fullName evidence="1">4-hydroxy-3-methylbut-2-enyl diphosphate reductase</fullName>
        <shortName evidence="1">HMBPP reductase</shortName>
        <ecNumber evidence="1">1.17.7.4</ecNumber>
    </recommendedName>
</protein>
<name>ISPH_CHESB</name>
<accession>Q11KC7</accession>
<organism>
    <name type="scientific">Chelativorans sp. (strain BNC1)</name>
    <dbReference type="NCBI Taxonomy" id="266779"/>
    <lineage>
        <taxon>Bacteria</taxon>
        <taxon>Pseudomonadati</taxon>
        <taxon>Pseudomonadota</taxon>
        <taxon>Alphaproteobacteria</taxon>
        <taxon>Hyphomicrobiales</taxon>
        <taxon>Phyllobacteriaceae</taxon>
        <taxon>Chelativorans</taxon>
    </lineage>
</organism>
<proteinExistence type="inferred from homology"/>
<gene>
    <name evidence="1" type="primary">ispH</name>
    <name type="ordered locus">Meso_0748</name>
</gene>
<reference key="1">
    <citation type="submission" date="2006-06" db="EMBL/GenBank/DDBJ databases">
        <title>Complete sequence of chromosome of Mesorhizobium sp. BNC1.</title>
        <authorList>
            <consortium name="US DOE Joint Genome Institute"/>
            <person name="Copeland A."/>
            <person name="Lucas S."/>
            <person name="Lapidus A."/>
            <person name="Barry K."/>
            <person name="Detter J.C."/>
            <person name="Glavina del Rio T."/>
            <person name="Hammon N."/>
            <person name="Israni S."/>
            <person name="Dalin E."/>
            <person name="Tice H."/>
            <person name="Pitluck S."/>
            <person name="Chertkov O."/>
            <person name="Brettin T."/>
            <person name="Bruce D."/>
            <person name="Han C."/>
            <person name="Tapia R."/>
            <person name="Gilna P."/>
            <person name="Schmutz J."/>
            <person name="Larimer F."/>
            <person name="Land M."/>
            <person name="Hauser L."/>
            <person name="Kyrpides N."/>
            <person name="Mikhailova N."/>
            <person name="Richardson P."/>
        </authorList>
    </citation>
    <scope>NUCLEOTIDE SEQUENCE [LARGE SCALE GENOMIC DNA]</scope>
    <source>
        <strain>BNC1</strain>
    </source>
</reference>
<comment type="function">
    <text evidence="1">Catalyzes the conversion of 1-hydroxy-2-methyl-2-(E)-butenyl 4-diphosphate (HMBPP) into a mixture of isopentenyl diphosphate (IPP) and dimethylallyl diphosphate (DMAPP). Acts in the terminal step of the DOXP/MEP pathway for isoprenoid precursor biosynthesis.</text>
</comment>
<comment type="catalytic activity">
    <reaction evidence="1">
        <text>isopentenyl diphosphate + 2 oxidized [2Fe-2S]-[ferredoxin] + H2O = (2E)-4-hydroxy-3-methylbut-2-enyl diphosphate + 2 reduced [2Fe-2S]-[ferredoxin] + 2 H(+)</text>
        <dbReference type="Rhea" id="RHEA:24488"/>
        <dbReference type="Rhea" id="RHEA-COMP:10000"/>
        <dbReference type="Rhea" id="RHEA-COMP:10001"/>
        <dbReference type="ChEBI" id="CHEBI:15377"/>
        <dbReference type="ChEBI" id="CHEBI:15378"/>
        <dbReference type="ChEBI" id="CHEBI:33737"/>
        <dbReference type="ChEBI" id="CHEBI:33738"/>
        <dbReference type="ChEBI" id="CHEBI:128753"/>
        <dbReference type="ChEBI" id="CHEBI:128769"/>
        <dbReference type="EC" id="1.17.7.4"/>
    </reaction>
</comment>
<comment type="catalytic activity">
    <reaction evidence="1">
        <text>dimethylallyl diphosphate + 2 oxidized [2Fe-2S]-[ferredoxin] + H2O = (2E)-4-hydroxy-3-methylbut-2-enyl diphosphate + 2 reduced [2Fe-2S]-[ferredoxin] + 2 H(+)</text>
        <dbReference type="Rhea" id="RHEA:24825"/>
        <dbReference type="Rhea" id="RHEA-COMP:10000"/>
        <dbReference type="Rhea" id="RHEA-COMP:10001"/>
        <dbReference type="ChEBI" id="CHEBI:15377"/>
        <dbReference type="ChEBI" id="CHEBI:15378"/>
        <dbReference type="ChEBI" id="CHEBI:33737"/>
        <dbReference type="ChEBI" id="CHEBI:33738"/>
        <dbReference type="ChEBI" id="CHEBI:57623"/>
        <dbReference type="ChEBI" id="CHEBI:128753"/>
        <dbReference type="EC" id="1.17.7.4"/>
    </reaction>
</comment>
<comment type="cofactor">
    <cofactor evidence="1">
        <name>[4Fe-4S] cluster</name>
        <dbReference type="ChEBI" id="CHEBI:49883"/>
    </cofactor>
    <text evidence="1">Binds 1 [4Fe-4S] cluster per subunit.</text>
</comment>
<comment type="pathway">
    <text evidence="1">Isoprenoid biosynthesis; dimethylallyl diphosphate biosynthesis; dimethylallyl diphosphate from (2E)-4-hydroxy-3-methylbutenyl diphosphate: step 1/1.</text>
</comment>
<comment type="pathway">
    <text evidence="1">Isoprenoid biosynthesis; isopentenyl diphosphate biosynthesis via DXP pathway; isopentenyl diphosphate from 1-deoxy-D-xylulose 5-phosphate: step 6/6.</text>
</comment>
<comment type="similarity">
    <text evidence="1">Belongs to the IspH family.</text>
</comment>
<evidence type="ECO:0000255" key="1">
    <source>
        <dbReference type="HAMAP-Rule" id="MF_00191"/>
    </source>
</evidence>
<feature type="chain" id="PRO_1000021136" description="4-hydroxy-3-methylbut-2-enyl diphosphate reductase">
    <location>
        <begin position="1"/>
        <end position="334"/>
    </location>
</feature>
<feature type="active site" description="Proton donor" evidence="1">
    <location>
        <position position="136"/>
    </location>
</feature>
<feature type="binding site" evidence="1">
    <location>
        <position position="19"/>
    </location>
    <ligand>
        <name>[4Fe-4S] cluster</name>
        <dbReference type="ChEBI" id="CHEBI:49883"/>
    </ligand>
</feature>
<feature type="binding site" evidence="1">
    <location>
        <position position="48"/>
    </location>
    <ligand>
        <name>(2E)-4-hydroxy-3-methylbut-2-enyl diphosphate</name>
        <dbReference type="ChEBI" id="CHEBI:128753"/>
    </ligand>
</feature>
<feature type="binding site" evidence="1">
    <location>
        <position position="48"/>
    </location>
    <ligand>
        <name>dimethylallyl diphosphate</name>
        <dbReference type="ChEBI" id="CHEBI:57623"/>
    </ligand>
</feature>
<feature type="binding site" evidence="1">
    <location>
        <position position="48"/>
    </location>
    <ligand>
        <name>isopentenyl diphosphate</name>
        <dbReference type="ChEBI" id="CHEBI:128769"/>
    </ligand>
</feature>
<feature type="binding site" evidence="1">
    <location>
        <position position="84"/>
    </location>
    <ligand>
        <name>(2E)-4-hydroxy-3-methylbut-2-enyl diphosphate</name>
        <dbReference type="ChEBI" id="CHEBI:128753"/>
    </ligand>
</feature>
<feature type="binding site" evidence="1">
    <location>
        <position position="84"/>
    </location>
    <ligand>
        <name>dimethylallyl diphosphate</name>
        <dbReference type="ChEBI" id="CHEBI:57623"/>
    </ligand>
</feature>
<feature type="binding site" evidence="1">
    <location>
        <position position="84"/>
    </location>
    <ligand>
        <name>isopentenyl diphosphate</name>
        <dbReference type="ChEBI" id="CHEBI:128769"/>
    </ligand>
</feature>
<feature type="binding site" evidence="1">
    <location>
        <position position="106"/>
    </location>
    <ligand>
        <name>[4Fe-4S] cluster</name>
        <dbReference type="ChEBI" id="CHEBI:49883"/>
    </ligand>
</feature>
<feature type="binding site" evidence="1">
    <location>
        <position position="134"/>
    </location>
    <ligand>
        <name>(2E)-4-hydroxy-3-methylbut-2-enyl diphosphate</name>
        <dbReference type="ChEBI" id="CHEBI:128753"/>
    </ligand>
</feature>
<feature type="binding site" evidence="1">
    <location>
        <position position="134"/>
    </location>
    <ligand>
        <name>dimethylallyl diphosphate</name>
        <dbReference type="ChEBI" id="CHEBI:57623"/>
    </ligand>
</feature>
<feature type="binding site" evidence="1">
    <location>
        <position position="134"/>
    </location>
    <ligand>
        <name>isopentenyl diphosphate</name>
        <dbReference type="ChEBI" id="CHEBI:128769"/>
    </ligand>
</feature>
<feature type="binding site" evidence="1">
    <location>
        <position position="175"/>
    </location>
    <ligand>
        <name>(2E)-4-hydroxy-3-methylbut-2-enyl diphosphate</name>
        <dbReference type="ChEBI" id="CHEBI:128753"/>
    </ligand>
</feature>
<feature type="binding site" evidence="1">
    <location>
        <position position="205"/>
    </location>
    <ligand>
        <name>[4Fe-4S] cluster</name>
        <dbReference type="ChEBI" id="CHEBI:49883"/>
    </ligand>
</feature>
<feature type="binding site" evidence="1">
    <location>
        <position position="233"/>
    </location>
    <ligand>
        <name>(2E)-4-hydroxy-3-methylbut-2-enyl diphosphate</name>
        <dbReference type="ChEBI" id="CHEBI:128753"/>
    </ligand>
</feature>
<feature type="binding site" evidence="1">
    <location>
        <position position="233"/>
    </location>
    <ligand>
        <name>dimethylallyl diphosphate</name>
        <dbReference type="ChEBI" id="CHEBI:57623"/>
    </ligand>
</feature>
<feature type="binding site" evidence="1">
    <location>
        <position position="233"/>
    </location>
    <ligand>
        <name>isopentenyl diphosphate</name>
        <dbReference type="ChEBI" id="CHEBI:128769"/>
    </ligand>
</feature>
<feature type="binding site" evidence="1">
    <location>
        <position position="234"/>
    </location>
    <ligand>
        <name>(2E)-4-hydroxy-3-methylbut-2-enyl diphosphate</name>
        <dbReference type="ChEBI" id="CHEBI:128753"/>
    </ligand>
</feature>
<feature type="binding site" evidence="1">
    <location>
        <position position="234"/>
    </location>
    <ligand>
        <name>dimethylallyl diphosphate</name>
        <dbReference type="ChEBI" id="CHEBI:57623"/>
    </ligand>
</feature>
<feature type="binding site" evidence="1">
    <location>
        <position position="234"/>
    </location>
    <ligand>
        <name>isopentenyl diphosphate</name>
        <dbReference type="ChEBI" id="CHEBI:128769"/>
    </ligand>
</feature>
<feature type="binding site" evidence="1">
    <location>
        <position position="235"/>
    </location>
    <ligand>
        <name>(2E)-4-hydroxy-3-methylbut-2-enyl diphosphate</name>
        <dbReference type="ChEBI" id="CHEBI:128753"/>
    </ligand>
</feature>
<feature type="binding site" evidence="1">
    <location>
        <position position="235"/>
    </location>
    <ligand>
        <name>dimethylallyl diphosphate</name>
        <dbReference type="ChEBI" id="CHEBI:57623"/>
    </ligand>
</feature>
<feature type="binding site" evidence="1">
    <location>
        <position position="235"/>
    </location>
    <ligand>
        <name>isopentenyl diphosphate</name>
        <dbReference type="ChEBI" id="CHEBI:128769"/>
    </ligand>
</feature>
<feature type="binding site" evidence="1">
    <location>
        <position position="278"/>
    </location>
    <ligand>
        <name>(2E)-4-hydroxy-3-methylbut-2-enyl diphosphate</name>
        <dbReference type="ChEBI" id="CHEBI:128753"/>
    </ligand>
</feature>
<feature type="binding site" evidence="1">
    <location>
        <position position="278"/>
    </location>
    <ligand>
        <name>dimethylallyl diphosphate</name>
        <dbReference type="ChEBI" id="CHEBI:57623"/>
    </ligand>
</feature>
<feature type="binding site" evidence="1">
    <location>
        <position position="278"/>
    </location>
    <ligand>
        <name>isopentenyl diphosphate</name>
        <dbReference type="ChEBI" id="CHEBI:128769"/>
    </ligand>
</feature>
<dbReference type="EC" id="1.17.7.4" evidence="1"/>
<dbReference type="EMBL" id="CP000390">
    <property type="protein sequence ID" value="ABG62148.1"/>
    <property type="molecule type" value="Genomic_DNA"/>
</dbReference>
<dbReference type="SMR" id="Q11KC7"/>
<dbReference type="STRING" id="266779.Meso_0748"/>
<dbReference type="KEGG" id="mes:Meso_0748"/>
<dbReference type="eggNOG" id="COG0761">
    <property type="taxonomic scope" value="Bacteria"/>
</dbReference>
<dbReference type="HOGENOM" id="CLU_027486_1_0_5"/>
<dbReference type="OrthoDB" id="9804068at2"/>
<dbReference type="UniPathway" id="UPA00056">
    <property type="reaction ID" value="UER00097"/>
</dbReference>
<dbReference type="UniPathway" id="UPA00059">
    <property type="reaction ID" value="UER00105"/>
</dbReference>
<dbReference type="GO" id="GO:0051539">
    <property type="term" value="F:4 iron, 4 sulfur cluster binding"/>
    <property type="evidence" value="ECO:0007669"/>
    <property type="project" value="UniProtKB-UniRule"/>
</dbReference>
<dbReference type="GO" id="GO:0051745">
    <property type="term" value="F:4-hydroxy-3-methylbut-2-enyl diphosphate reductase activity"/>
    <property type="evidence" value="ECO:0007669"/>
    <property type="project" value="UniProtKB-UniRule"/>
</dbReference>
<dbReference type="GO" id="GO:0046872">
    <property type="term" value="F:metal ion binding"/>
    <property type="evidence" value="ECO:0007669"/>
    <property type="project" value="UniProtKB-KW"/>
</dbReference>
<dbReference type="GO" id="GO:0050992">
    <property type="term" value="P:dimethylallyl diphosphate biosynthetic process"/>
    <property type="evidence" value="ECO:0007669"/>
    <property type="project" value="UniProtKB-UniRule"/>
</dbReference>
<dbReference type="GO" id="GO:0019288">
    <property type="term" value="P:isopentenyl diphosphate biosynthetic process, methylerythritol 4-phosphate pathway"/>
    <property type="evidence" value="ECO:0007669"/>
    <property type="project" value="UniProtKB-UniRule"/>
</dbReference>
<dbReference type="GO" id="GO:0016114">
    <property type="term" value="P:terpenoid biosynthetic process"/>
    <property type="evidence" value="ECO:0007669"/>
    <property type="project" value="UniProtKB-UniRule"/>
</dbReference>
<dbReference type="CDD" id="cd13944">
    <property type="entry name" value="lytB_ispH"/>
    <property type="match status" value="1"/>
</dbReference>
<dbReference type="Gene3D" id="3.40.50.11270">
    <property type="match status" value="1"/>
</dbReference>
<dbReference type="Gene3D" id="3.40.1010.20">
    <property type="entry name" value="4-hydroxy-3-methylbut-2-enyl diphosphate reductase, catalytic domain"/>
    <property type="match status" value="2"/>
</dbReference>
<dbReference type="HAMAP" id="MF_00191">
    <property type="entry name" value="IspH"/>
    <property type="match status" value="1"/>
</dbReference>
<dbReference type="InterPro" id="IPR003451">
    <property type="entry name" value="LytB/IspH"/>
</dbReference>
<dbReference type="NCBIfam" id="TIGR00216">
    <property type="entry name" value="ispH_lytB"/>
    <property type="match status" value="1"/>
</dbReference>
<dbReference type="NCBIfam" id="NF002190">
    <property type="entry name" value="PRK01045.1-4"/>
    <property type="match status" value="1"/>
</dbReference>
<dbReference type="PANTHER" id="PTHR30426">
    <property type="entry name" value="4-HYDROXY-3-METHYLBUT-2-ENYL DIPHOSPHATE REDUCTASE"/>
    <property type="match status" value="1"/>
</dbReference>
<dbReference type="PANTHER" id="PTHR30426:SF0">
    <property type="entry name" value="4-HYDROXY-3-METHYLBUT-2-ENYL DIPHOSPHATE REDUCTASE"/>
    <property type="match status" value="1"/>
</dbReference>
<dbReference type="Pfam" id="PF02401">
    <property type="entry name" value="LYTB"/>
    <property type="match status" value="1"/>
</dbReference>